<gene>
    <name evidence="1" type="primary">guaC</name>
    <name type="ordered locus">BCE_5594</name>
</gene>
<protein>
    <recommendedName>
        <fullName evidence="1">GMP reductase</fullName>
        <ecNumber evidence="1">1.7.1.7</ecNumber>
    </recommendedName>
    <alternativeName>
        <fullName evidence="1">Guanosine 5'-monophosphate oxidoreductase</fullName>
        <shortName evidence="1">Guanosine monophosphate reductase</shortName>
    </alternativeName>
</protein>
<feature type="chain" id="PRO_0000093747" description="GMP reductase">
    <location>
        <begin position="1"/>
        <end position="327"/>
    </location>
</feature>
<feature type="active site" description="Thioimidate intermediate" evidence="1">
    <location>
        <position position="175"/>
    </location>
</feature>
<feature type="binding site" evidence="1">
    <location>
        <begin position="204"/>
        <end position="227"/>
    </location>
    <ligand>
        <name>NADP(+)</name>
        <dbReference type="ChEBI" id="CHEBI:58349"/>
    </ligand>
</feature>
<keyword id="KW-0521">NADP</keyword>
<keyword id="KW-0560">Oxidoreductase</keyword>
<reference key="1">
    <citation type="journal article" date="2004" name="Nucleic Acids Res.">
        <title>The genome sequence of Bacillus cereus ATCC 10987 reveals metabolic adaptations and a large plasmid related to Bacillus anthracis pXO1.</title>
        <authorList>
            <person name="Rasko D.A."/>
            <person name="Ravel J."/>
            <person name="Oekstad O.A."/>
            <person name="Helgason E."/>
            <person name="Cer R.Z."/>
            <person name="Jiang L."/>
            <person name="Shores K.A."/>
            <person name="Fouts D.E."/>
            <person name="Tourasse N.J."/>
            <person name="Angiuoli S.V."/>
            <person name="Kolonay J.F."/>
            <person name="Nelson W.C."/>
            <person name="Kolstoe A.-B."/>
            <person name="Fraser C.M."/>
            <person name="Read T.D."/>
        </authorList>
    </citation>
    <scope>NUCLEOTIDE SEQUENCE [LARGE SCALE GENOMIC DNA]</scope>
    <source>
        <strain>ATCC 10987 / NRS 248</strain>
    </source>
</reference>
<organism>
    <name type="scientific">Bacillus cereus (strain ATCC 10987 / NRS 248)</name>
    <dbReference type="NCBI Taxonomy" id="222523"/>
    <lineage>
        <taxon>Bacteria</taxon>
        <taxon>Bacillati</taxon>
        <taxon>Bacillota</taxon>
        <taxon>Bacilli</taxon>
        <taxon>Bacillales</taxon>
        <taxon>Bacillaceae</taxon>
        <taxon>Bacillus</taxon>
        <taxon>Bacillus cereus group</taxon>
    </lineage>
</organism>
<proteinExistence type="inferred from homology"/>
<sequence>MENVFDYEDIQLIPAKCIVNSRSECDTTVTLGKHKFKLPVVPANMQTIIDERIATYLAENNYFYIMHRFQPEKRISFIRDMQSRGLIASISVGVKADEYEFVQQLAAEHLTPEYITIDIAHGHSNAVINMIQHIKKHLPESFVIAGNVGTPEAVRELENAGADATKVGIGPGKVCITKIKTGFGTGGWQLAALRWCAKAASKPIIADGGIRTHGDVAKSIRFGATMVMIGSLFAGHEESPGETIEKDGKLYKEYFGSASEFQKGEKKNVEGKKMFVEHKGSLEDTLIEMEQDLQSSISYAGGTKLDSIRTVDYVVVKNSIFNGDKVY</sequence>
<evidence type="ECO:0000255" key="1">
    <source>
        <dbReference type="HAMAP-Rule" id="MF_01511"/>
    </source>
</evidence>
<dbReference type="EC" id="1.7.1.7" evidence="1"/>
<dbReference type="EMBL" id="AE017194">
    <property type="protein sequence ID" value="AAS44494.1"/>
    <property type="molecule type" value="Genomic_DNA"/>
</dbReference>
<dbReference type="SMR" id="Q72WY4"/>
<dbReference type="KEGG" id="bca:BCE_5594"/>
<dbReference type="HOGENOM" id="CLU_022552_5_0_9"/>
<dbReference type="Proteomes" id="UP000002527">
    <property type="component" value="Chromosome"/>
</dbReference>
<dbReference type="GO" id="GO:0005829">
    <property type="term" value="C:cytosol"/>
    <property type="evidence" value="ECO:0007669"/>
    <property type="project" value="TreeGrafter"/>
</dbReference>
<dbReference type="GO" id="GO:1902560">
    <property type="term" value="C:GMP reductase complex"/>
    <property type="evidence" value="ECO:0007669"/>
    <property type="project" value="InterPro"/>
</dbReference>
<dbReference type="GO" id="GO:0003920">
    <property type="term" value="F:GMP reductase activity"/>
    <property type="evidence" value="ECO:0007669"/>
    <property type="project" value="UniProtKB-UniRule"/>
</dbReference>
<dbReference type="GO" id="GO:0016627">
    <property type="term" value="F:oxidoreductase activity, acting on the CH-CH group of donors"/>
    <property type="evidence" value="ECO:0007669"/>
    <property type="project" value="InterPro"/>
</dbReference>
<dbReference type="GO" id="GO:0006207">
    <property type="term" value="P:'de novo' pyrimidine nucleobase biosynthetic process"/>
    <property type="evidence" value="ECO:0007669"/>
    <property type="project" value="InterPro"/>
</dbReference>
<dbReference type="GO" id="GO:0006163">
    <property type="term" value="P:purine nucleotide metabolic process"/>
    <property type="evidence" value="ECO:0007669"/>
    <property type="project" value="UniProtKB-UniRule"/>
</dbReference>
<dbReference type="CDD" id="cd00381">
    <property type="entry name" value="IMPDH"/>
    <property type="match status" value="1"/>
</dbReference>
<dbReference type="FunFam" id="3.20.20.70:FF:000079">
    <property type="entry name" value="GMP reductase"/>
    <property type="match status" value="1"/>
</dbReference>
<dbReference type="Gene3D" id="3.20.20.70">
    <property type="entry name" value="Aldolase class I"/>
    <property type="match status" value="1"/>
</dbReference>
<dbReference type="HAMAP" id="MF_01511">
    <property type="entry name" value="GMP_reduct_type2"/>
    <property type="match status" value="1"/>
</dbReference>
<dbReference type="InterPro" id="IPR013785">
    <property type="entry name" value="Aldolase_TIM"/>
</dbReference>
<dbReference type="InterPro" id="IPR001295">
    <property type="entry name" value="Dihydroorotate_DH_CS"/>
</dbReference>
<dbReference type="InterPro" id="IPR050139">
    <property type="entry name" value="GMP_reductase"/>
</dbReference>
<dbReference type="InterPro" id="IPR005994">
    <property type="entry name" value="GuaC_type_2"/>
</dbReference>
<dbReference type="InterPro" id="IPR015875">
    <property type="entry name" value="IMP_DH/GMP_Rdtase_CS"/>
</dbReference>
<dbReference type="InterPro" id="IPR001093">
    <property type="entry name" value="IMP_DH_GMPRt"/>
</dbReference>
<dbReference type="NCBIfam" id="TIGR01306">
    <property type="entry name" value="GMP_reduct_2"/>
    <property type="match status" value="1"/>
</dbReference>
<dbReference type="NCBIfam" id="NF003966">
    <property type="entry name" value="PRK05458.1"/>
    <property type="match status" value="1"/>
</dbReference>
<dbReference type="PANTHER" id="PTHR43170">
    <property type="entry name" value="GMP REDUCTASE"/>
    <property type="match status" value="1"/>
</dbReference>
<dbReference type="PANTHER" id="PTHR43170:SF5">
    <property type="entry name" value="GMP REDUCTASE"/>
    <property type="match status" value="1"/>
</dbReference>
<dbReference type="Pfam" id="PF00478">
    <property type="entry name" value="IMPDH"/>
    <property type="match status" value="1"/>
</dbReference>
<dbReference type="PIRSF" id="PIRSF036500">
    <property type="entry name" value="GMP_red_Firmic"/>
    <property type="match status" value="1"/>
</dbReference>
<dbReference type="SMART" id="SM01240">
    <property type="entry name" value="IMPDH"/>
    <property type="match status" value="1"/>
</dbReference>
<dbReference type="SUPFAM" id="SSF51412">
    <property type="entry name" value="Inosine monophosphate dehydrogenase (IMPDH)"/>
    <property type="match status" value="1"/>
</dbReference>
<dbReference type="PROSITE" id="PS00487">
    <property type="entry name" value="IMP_DH_GMP_RED"/>
    <property type="match status" value="1"/>
</dbReference>
<name>GUAC_BACC1</name>
<comment type="function">
    <text evidence="1">Catalyzes the irreversible NADPH-dependent deamination of GMP to IMP. It functions in the conversion of nucleobase, nucleoside and nucleotide derivatives of G to A nucleotides, and in maintaining the intracellular balance of A and G nucleotides.</text>
</comment>
<comment type="catalytic activity">
    <reaction evidence="1">
        <text>IMP + NH4(+) + NADP(+) = GMP + NADPH + 2 H(+)</text>
        <dbReference type="Rhea" id="RHEA:17185"/>
        <dbReference type="ChEBI" id="CHEBI:15378"/>
        <dbReference type="ChEBI" id="CHEBI:28938"/>
        <dbReference type="ChEBI" id="CHEBI:57783"/>
        <dbReference type="ChEBI" id="CHEBI:58053"/>
        <dbReference type="ChEBI" id="CHEBI:58115"/>
        <dbReference type="ChEBI" id="CHEBI:58349"/>
        <dbReference type="EC" id="1.7.1.7"/>
    </reaction>
</comment>
<comment type="similarity">
    <text evidence="1">Belongs to the IMPDH/GMPR family. GuaC type 2 subfamily.</text>
</comment>
<accession>Q72WY4</accession>